<organism>
    <name type="scientific">Serratia proteamaculans (strain 568)</name>
    <dbReference type="NCBI Taxonomy" id="399741"/>
    <lineage>
        <taxon>Bacteria</taxon>
        <taxon>Pseudomonadati</taxon>
        <taxon>Pseudomonadota</taxon>
        <taxon>Gammaproteobacteria</taxon>
        <taxon>Enterobacterales</taxon>
        <taxon>Yersiniaceae</taxon>
        <taxon>Serratia</taxon>
    </lineage>
</organism>
<dbReference type="EC" id="3.1.3.5" evidence="1"/>
<dbReference type="EC" id="3.1.3.6" evidence="1"/>
<dbReference type="EC" id="3.6.1.11" evidence="1"/>
<dbReference type="EMBL" id="CP000826">
    <property type="protein sequence ID" value="ABV39935.1"/>
    <property type="molecule type" value="Genomic_DNA"/>
</dbReference>
<dbReference type="SMR" id="A8G9Z5"/>
<dbReference type="STRING" id="399741.Spro_0829"/>
<dbReference type="KEGG" id="spe:Spro_0829"/>
<dbReference type="eggNOG" id="COG0496">
    <property type="taxonomic scope" value="Bacteria"/>
</dbReference>
<dbReference type="HOGENOM" id="CLU_045192_1_2_6"/>
<dbReference type="OrthoDB" id="9780815at2"/>
<dbReference type="GO" id="GO:0005737">
    <property type="term" value="C:cytoplasm"/>
    <property type="evidence" value="ECO:0007669"/>
    <property type="project" value="UniProtKB-SubCell"/>
</dbReference>
<dbReference type="GO" id="GO:0008254">
    <property type="term" value="F:3'-nucleotidase activity"/>
    <property type="evidence" value="ECO:0007669"/>
    <property type="project" value="UniProtKB-UniRule"/>
</dbReference>
<dbReference type="GO" id="GO:0008253">
    <property type="term" value="F:5'-nucleotidase activity"/>
    <property type="evidence" value="ECO:0007669"/>
    <property type="project" value="UniProtKB-UniRule"/>
</dbReference>
<dbReference type="GO" id="GO:0004309">
    <property type="term" value="F:exopolyphosphatase activity"/>
    <property type="evidence" value="ECO:0007669"/>
    <property type="project" value="UniProtKB-UniRule"/>
</dbReference>
<dbReference type="GO" id="GO:0046872">
    <property type="term" value="F:metal ion binding"/>
    <property type="evidence" value="ECO:0007669"/>
    <property type="project" value="UniProtKB-UniRule"/>
</dbReference>
<dbReference type="GO" id="GO:0000166">
    <property type="term" value="F:nucleotide binding"/>
    <property type="evidence" value="ECO:0007669"/>
    <property type="project" value="UniProtKB-KW"/>
</dbReference>
<dbReference type="FunFam" id="3.40.1210.10:FF:000001">
    <property type="entry name" value="5'/3'-nucleotidase SurE"/>
    <property type="match status" value="1"/>
</dbReference>
<dbReference type="Gene3D" id="3.40.1210.10">
    <property type="entry name" value="Survival protein SurE-like phosphatase/nucleotidase"/>
    <property type="match status" value="1"/>
</dbReference>
<dbReference type="HAMAP" id="MF_00060">
    <property type="entry name" value="SurE"/>
    <property type="match status" value="1"/>
</dbReference>
<dbReference type="InterPro" id="IPR030048">
    <property type="entry name" value="SurE"/>
</dbReference>
<dbReference type="InterPro" id="IPR002828">
    <property type="entry name" value="SurE-like_Pase/nucleotidase"/>
</dbReference>
<dbReference type="InterPro" id="IPR036523">
    <property type="entry name" value="SurE-like_sf"/>
</dbReference>
<dbReference type="NCBIfam" id="NF001488">
    <property type="entry name" value="PRK00346.1-1"/>
    <property type="match status" value="1"/>
</dbReference>
<dbReference type="NCBIfam" id="NF001489">
    <property type="entry name" value="PRK00346.1-3"/>
    <property type="match status" value="1"/>
</dbReference>
<dbReference type="NCBIfam" id="NF001490">
    <property type="entry name" value="PRK00346.1-4"/>
    <property type="match status" value="1"/>
</dbReference>
<dbReference type="NCBIfam" id="TIGR00087">
    <property type="entry name" value="surE"/>
    <property type="match status" value="1"/>
</dbReference>
<dbReference type="PANTHER" id="PTHR30457">
    <property type="entry name" value="5'-NUCLEOTIDASE SURE"/>
    <property type="match status" value="1"/>
</dbReference>
<dbReference type="PANTHER" id="PTHR30457:SF12">
    <property type="entry name" value="5'_3'-NUCLEOTIDASE SURE"/>
    <property type="match status" value="1"/>
</dbReference>
<dbReference type="Pfam" id="PF01975">
    <property type="entry name" value="SurE"/>
    <property type="match status" value="1"/>
</dbReference>
<dbReference type="SUPFAM" id="SSF64167">
    <property type="entry name" value="SurE-like"/>
    <property type="match status" value="1"/>
</dbReference>
<feature type="chain" id="PRO_0000335269" description="5'/3'-nucleotidase SurE">
    <location>
        <begin position="1"/>
        <end position="253"/>
    </location>
</feature>
<feature type="binding site" evidence="1">
    <location>
        <position position="8"/>
    </location>
    <ligand>
        <name>a divalent metal cation</name>
        <dbReference type="ChEBI" id="CHEBI:60240"/>
    </ligand>
</feature>
<feature type="binding site" evidence="1">
    <location>
        <position position="9"/>
    </location>
    <ligand>
        <name>a divalent metal cation</name>
        <dbReference type="ChEBI" id="CHEBI:60240"/>
    </ligand>
</feature>
<feature type="binding site" evidence="1">
    <location>
        <position position="39"/>
    </location>
    <ligand>
        <name>a divalent metal cation</name>
        <dbReference type="ChEBI" id="CHEBI:60240"/>
    </ligand>
</feature>
<feature type="binding site" evidence="1">
    <location>
        <position position="92"/>
    </location>
    <ligand>
        <name>a divalent metal cation</name>
        <dbReference type="ChEBI" id="CHEBI:60240"/>
    </ligand>
</feature>
<keyword id="KW-0963">Cytoplasm</keyword>
<keyword id="KW-0378">Hydrolase</keyword>
<keyword id="KW-0479">Metal-binding</keyword>
<keyword id="KW-0547">Nucleotide-binding</keyword>
<evidence type="ECO:0000255" key="1">
    <source>
        <dbReference type="HAMAP-Rule" id="MF_00060"/>
    </source>
</evidence>
<comment type="function">
    <text evidence="1">Nucleotidase with a broad substrate specificity as it can dephosphorylate various ribo- and deoxyribonucleoside 5'-monophosphates and ribonucleoside 3'-monophosphates with highest affinity to 3'-AMP. Also hydrolyzes polyphosphate (exopolyphosphatase activity) with the preference for short-chain-length substrates (P20-25). Might be involved in the regulation of dNTP and NTP pools, and in the turnover of 3'-mononucleotides produced by numerous intracellular RNases (T1, T2, and F) during the degradation of various RNAs.</text>
</comment>
<comment type="catalytic activity">
    <reaction evidence="1">
        <text>a ribonucleoside 5'-phosphate + H2O = a ribonucleoside + phosphate</text>
        <dbReference type="Rhea" id="RHEA:12484"/>
        <dbReference type="ChEBI" id="CHEBI:15377"/>
        <dbReference type="ChEBI" id="CHEBI:18254"/>
        <dbReference type="ChEBI" id="CHEBI:43474"/>
        <dbReference type="ChEBI" id="CHEBI:58043"/>
        <dbReference type="EC" id="3.1.3.5"/>
    </reaction>
</comment>
<comment type="catalytic activity">
    <reaction evidence="1">
        <text>a ribonucleoside 3'-phosphate + H2O = a ribonucleoside + phosphate</text>
        <dbReference type="Rhea" id="RHEA:10144"/>
        <dbReference type="ChEBI" id="CHEBI:13197"/>
        <dbReference type="ChEBI" id="CHEBI:15377"/>
        <dbReference type="ChEBI" id="CHEBI:18254"/>
        <dbReference type="ChEBI" id="CHEBI:43474"/>
        <dbReference type="EC" id="3.1.3.6"/>
    </reaction>
</comment>
<comment type="catalytic activity">
    <reaction evidence="1">
        <text>[phosphate](n) + H2O = [phosphate](n-1) + phosphate + H(+)</text>
        <dbReference type="Rhea" id="RHEA:21528"/>
        <dbReference type="Rhea" id="RHEA-COMP:9859"/>
        <dbReference type="Rhea" id="RHEA-COMP:14279"/>
        <dbReference type="ChEBI" id="CHEBI:15377"/>
        <dbReference type="ChEBI" id="CHEBI:15378"/>
        <dbReference type="ChEBI" id="CHEBI:16838"/>
        <dbReference type="ChEBI" id="CHEBI:43474"/>
        <dbReference type="EC" id="3.6.1.11"/>
    </reaction>
</comment>
<comment type="cofactor">
    <cofactor evidence="1">
        <name>a divalent metal cation</name>
        <dbReference type="ChEBI" id="CHEBI:60240"/>
    </cofactor>
    <text evidence="1">Binds 1 divalent metal cation per subunit.</text>
</comment>
<comment type="subcellular location">
    <subcellularLocation>
        <location evidence="1">Cytoplasm</location>
    </subcellularLocation>
</comment>
<comment type="similarity">
    <text evidence="1">Belongs to the SurE nucleotidase family.</text>
</comment>
<name>SURE_SERP5</name>
<proteinExistence type="inferred from homology"/>
<accession>A8G9Z5</accession>
<gene>
    <name evidence="1" type="primary">surE</name>
    <name type="ordered locus">Spro_0829</name>
</gene>
<reference key="1">
    <citation type="submission" date="2007-09" db="EMBL/GenBank/DDBJ databases">
        <title>Complete sequence of chromosome of Serratia proteamaculans 568.</title>
        <authorList>
            <consortium name="US DOE Joint Genome Institute"/>
            <person name="Copeland A."/>
            <person name="Lucas S."/>
            <person name="Lapidus A."/>
            <person name="Barry K."/>
            <person name="Glavina del Rio T."/>
            <person name="Dalin E."/>
            <person name="Tice H."/>
            <person name="Pitluck S."/>
            <person name="Chain P."/>
            <person name="Malfatti S."/>
            <person name="Shin M."/>
            <person name="Vergez L."/>
            <person name="Schmutz J."/>
            <person name="Larimer F."/>
            <person name="Land M."/>
            <person name="Hauser L."/>
            <person name="Kyrpides N."/>
            <person name="Kim E."/>
            <person name="Taghavi S."/>
            <person name="Newman L."/>
            <person name="Vangronsveld J."/>
            <person name="van der Lelie D."/>
            <person name="Richardson P."/>
        </authorList>
    </citation>
    <scope>NUCLEOTIDE SEQUENCE [LARGE SCALE GENOMIC DNA]</scope>
    <source>
        <strain>568</strain>
    </source>
</reference>
<sequence>MRILLSNDDGVTAPGIQVLAAALREFAEVQVVAPDRNRSGSSNALTLESPLRTLTMPNGDIAVQQGTPTDCVYLGVNALMQPAPDIVVSGINAGPNLGDDVIYSGTVAAAMEGRHLGLPALAVSLNGHQHYATAAAITCRVLRALQREPLRTGKILNINVPDLPLDQIKGIRVTRCGSRHPADKVFCQQDPRGQNLYWIGPPGDKFDAGPDTDFAAVEQGYVAITPLQVDLTAYAAQDVVKTWLTKAGVGGEW</sequence>
<protein>
    <recommendedName>
        <fullName evidence="1">5'/3'-nucleotidase SurE</fullName>
        <ecNumber evidence="1">3.1.3.5</ecNumber>
        <ecNumber evidence="1">3.1.3.6</ecNumber>
    </recommendedName>
    <alternativeName>
        <fullName evidence="1">Exopolyphosphatase</fullName>
        <ecNumber evidence="1">3.6.1.11</ecNumber>
    </alternativeName>
    <alternativeName>
        <fullName evidence="1">Nucleoside monophosphate phosphohydrolase</fullName>
    </alternativeName>
</protein>